<evidence type="ECO:0000255" key="1">
    <source>
        <dbReference type="HAMAP-Rule" id="MF_01368"/>
    </source>
</evidence>
<evidence type="ECO:0000305" key="2"/>
<feature type="chain" id="PRO_0000224138" description="Large ribosomal subunit protein bL17">
    <location>
        <begin position="1"/>
        <end position="122"/>
    </location>
</feature>
<accession>Q99S46</accession>
<gene>
    <name evidence="1" type="primary">rplQ</name>
    <name type="ordered locus">SAV2223</name>
</gene>
<sequence length="122" mass="13748">MGYRKLGRTSDQRKAMLRDLATSLIISERIETTEARAKEVRSVVEKLITLGKKGDLASRRNAAKTLRNVEILNEDETTQTALQKLFGEIAERYTERQGGYTRILKQGPRRGDGAESVIIELV</sequence>
<keyword id="KW-0687">Ribonucleoprotein</keyword>
<keyword id="KW-0689">Ribosomal protein</keyword>
<dbReference type="EMBL" id="BA000017">
    <property type="protein sequence ID" value="BAB58385.1"/>
    <property type="molecule type" value="Genomic_DNA"/>
</dbReference>
<dbReference type="RefSeq" id="WP_000542274.1">
    <property type="nucleotide sequence ID" value="NC_002758.2"/>
</dbReference>
<dbReference type="SMR" id="Q99S46"/>
<dbReference type="GeneID" id="98346535"/>
<dbReference type="KEGG" id="sav:SAV2223"/>
<dbReference type="HOGENOM" id="CLU_074407_2_2_9"/>
<dbReference type="PhylomeDB" id="Q99S46"/>
<dbReference type="Proteomes" id="UP000002481">
    <property type="component" value="Chromosome"/>
</dbReference>
<dbReference type="GO" id="GO:0022625">
    <property type="term" value="C:cytosolic large ribosomal subunit"/>
    <property type="evidence" value="ECO:0007669"/>
    <property type="project" value="TreeGrafter"/>
</dbReference>
<dbReference type="GO" id="GO:0003735">
    <property type="term" value="F:structural constituent of ribosome"/>
    <property type="evidence" value="ECO:0007669"/>
    <property type="project" value="InterPro"/>
</dbReference>
<dbReference type="GO" id="GO:0006412">
    <property type="term" value="P:translation"/>
    <property type="evidence" value="ECO:0007669"/>
    <property type="project" value="UniProtKB-UniRule"/>
</dbReference>
<dbReference type="FunFam" id="3.90.1030.10:FF:000002">
    <property type="entry name" value="50S ribosomal protein L17"/>
    <property type="match status" value="1"/>
</dbReference>
<dbReference type="Gene3D" id="3.90.1030.10">
    <property type="entry name" value="Ribosomal protein L17"/>
    <property type="match status" value="1"/>
</dbReference>
<dbReference type="HAMAP" id="MF_01368">
    <property type="entry name" value="Ribosomal_bL17"/>
    <property type="match status" value="1"/>
</dbReference>
<dbReference type="InterPro" id="IPR000456">
    <property type="entry name" value="Ribosomal_bL17"/>
</dbReference>
<dbReference type="InterPro" id="IPR047859">
    <property type="entry name" value="Ribosomal_bL17_CS"/>
</dbReference>
<dbReference type="InterPro" id="IPR036373">
    <property type="entry name" value="Ribosomal_bL17_sf"/>
</dbReference>
<dbReference type="NCBIfam" id="TIGR00059">
    <property type="entry name" value="L17"/>
    <property type="match status" value="1"/>
</dbReference>
<dbReference type="PANTHER" id="PTHR14413:SF16">
    <property type="entry name" value="LARGE RIBOSOMAL SUBUNIT PROTEIN BL17M"/>
    <property type="match status" value="1"/>
</dbReference>
<dbReference type="PANTHER" id="PTHR14413">
    <property type="entry name" value="RIBOSOMAL PROTEIN L17"/>
    <property type="match status" value="1"/>
</dbReference>
<dbReference type="Pfam" id="PF01196">
    <property type="entry name" value="Ribosomal_L17"/>
    <property type="match status" value="1"/>
</dbReference>
<dbReference type="SUPFAM" id="SSF64263">
    <property type="entry name" value="Prokaryotic ribosomal protein L17"/>
    <property type="match status" value="1"/>
</dbReference>
<dbReference type="PROSITE" id="PS01167">
    <property type="entry name" value="RIBOSOMAL_L17"/>
    <property type="match status" value="1"/>
</dbReference>
<organism>
    <name type="scientific">Staphylococcus aureus (strain Mu50 / ATCC 700699)</name>
    <dbReference type="NCBI Taxonomy" id="158878"/>
    <lineage>
        <taxon>Bacteria</taxon>
        <taxon>Bacillati</taxon>
        <taxon>Bacillota</taxon>
        <taxon>Bacilli</taxon>
        <taxon>Bacillales</taxon>
        <taxon>Staphylococcaceae</taxon>
        <taxon>Staphylococcus</taxon>
    </lineage>
</organism>
<name>RL17_STAAM</name>
<protein>
    <recommendedName>
        <fullName evidence="1">Large ribosomal subunit protein bL17</fullName>
    </recommendedName>
    <alternativeName>
        <fullName evidence="2">50S ribosomal protein L17</fullName>
    </alternativeName>
</protein>
<proteinExistence type="inferred from homology"/>
<reference key="1">
    <citation type="journal article" date="2001" name="Lancet">
        <title>Whole genome sequencing of meticillin-resistant Staphylococcus aureus.</title>
        <authorList>
            <person name="Kuroda M."/>
            <person name="Ohta T."/>
            <person name="Uchiyama I."/>
            <person name="Baba T."/>
            <person name="Yuzawa H."/>
            <person name="Kobayashi I."/>
            <person name="Cui L."/>
            <person name="Oguchi A."/>
            <person name="Aoki K."/>
            <person name="Nagai Y."/>
            <person name="Lian J.-Q."/>
            <person name="Ito T."/>
            <person name="Kanamori M."/>
            <person name="Matsumaru H."/>
            <person name="Maruyama A."/>
            <person name="Murakami H."/>
            <person name="Hosoyama A."/>
            <person name="Mizutani-Ui Y."/>
            <person name="Takahashi N.K."/>
            <person name="Sawano T."/>
            <person name="Inoue R."/>
            <person name="Kaito C."/>
            <person name="Sekimizu K."/>
            <person name="Hirakawa H."/>
            <person name="Kuhara S."/>
            <person name="Goto S."/>
            <person name="Yabuzaki J."/>
            <person name="Kanehisa M."/>
            <person name="Yamashita A."/>
            <person name="Oshima K."/>
            <person name="Furuya K."/>
            <person name="Yoshino C."/>
            <person name="Shiba T."/>
            <person name="Hattori M."/>
            <person name="Ogasawara N."/>
            <person name="Hayashi H."/>
            <person name="Hiramatsu K."/>
        </authorList>
    </citation>
    <scope>NUCLEOTIDE SEQUENCE [LARGE SCALE GENOMIC DNA]</scope>
    <source>
        <strain>Mu50 / ATCC 700699</strain>
    </source>
</reference>
<comment type="subunit">
    <text evidence="1">Part of the 50S ribosomal subunit. Contacts protein L32.</text>
</comment>
<comment type="similarity">
    <text evidence="1">Belongs to the bacterial ribosomal protein bL17 family.</text>
</comment>